<dbReference type="EMBL" id="CP000577">
    <property type="protein sequence ID" value="ABN77208.1"/>
    <property type="molecule type" value="Genomic_DNA"/>
</dbReference>
<dbReference type="RefSeq" id="WP_002720615.1">
    <property type="nucleotide sequence ID" value="NC_009049.1"/>
</dbReference>
<dbReference type="SMR" id="A3PLJ2"/>
<dbReference type="GeneID" id="67447184"/>
<dbReference type="KEGG" id="rsh:Rsph17029_2105"/>
<dbReference type="HOGENOM" id="CLU_040469_1_2_5"/>
<dbReference type="GO" id="GO:0005829">
    <property type="term" value="C:cytosol"/>
    <property type="evidence" value="ECO:0007669"/>
    <property type="project" value="TreeGrafter"/>
</dbReference>
<dbReference type="GO" id="GO:0005524">
    <property type="term" value="F:ATP binding"/>
    <property type="evidence" value="ECO:0007669"/>
    <property type="project" value="UniProtKB-UniRule"/>
</dbReference>
<dbReference type="GO" id="GO:0016887">
    <property type="term" value="F:ATP hydrolysis activity"/>
    <property type="evidence" value="ECO:0007669"/>
    <property type="project" value="InterPro"/>
</dbReference>
<dbReference type="GO" id="GO:0140664">
    <property type="term" value="F:ATP-dependent DNA damage sensor activity"/>
    <property type="evidence" value="ECO:0007669"/>
    <property type="project" value="InterPro"/>
</dbReference>
<dbReference type="GO" id="GO:0003684">
    <property type="term" value="F:damaged DNA binding"/>
    <property type="evidence" value="ECO:0007669"/>
    <property type="project" value="UniProtKB-UniRule"/>
</dbReference>
<dbReference type="GO" id="GO:0003697">
    <property type="term" value="F:single-stranded DNA binding"/>
    <property type="evidence" value="ECO:0007669"/>
    <property type="project" value="UniProtKB-UniRule"/>
</dbReference>
<dbReference type="GO" id="GO:0006310">
    <property type="term" value="P:DNA recombination"/>
    <property type="evidence" value="ECO:0007669"/>
    <property type="project" value="UniProtKB-UniRule"/>
</dbReference>
<dbReference type="GO" id="GO:0006281">
    <property type="term" value="P:DNA repair"/>
    <property type="evidence" value="ECO:0007669"/>
    <property type="project" value="UniProtKB-UniRule"/>
</dbReference>
<dbReference type="GO" id="GO:0009432">
    <property type="term" value="P:SOS response"/>
    <property type="evidence" value="ECO:0000270"/>
    <property type="project" value="CollecTF"/>
</dbReference>
<dbReference type="CDD" id="cd00983">
    <property type="entry name" value="RecA"/>
    <property type="match status" value="1"/>
</dbReference>
<dbReference type="FunFam" id="3.40.50.300:FF:000087">
    <property type="entry name" value="Recombinase RecA"/>
    <property type="match status" value="1"/>
</dbReference>
<dbReference type="Gene3D" id="3.40.50.300">
    <property type="entry name" value="P-loop containing nucleotide triphosphate hydrolases"/>
    <property type="match status" value="1"/>
</dbReference>
<dbReference type="HAMAP" id="MF_00268">
    <property type="entry name" value="RecA"/>
    <property type="match status" value="1"/>
</dbReference>
<dbReference type="InterPro" id="IPR003593">
    <property type="entry name" value="AAA+_ATPase"/>
</dbReference>
<dbReference type="InterPro" id="IPR013765">
    <property type="entry name" value="DNA_recomb/repair_RecA"/>
</dbReference>
<dbReference type="InterPro" id="IPR020584">
    <property type="entry name" value="DNA_recomb/repair_RecA_CS"/>
</dbReference>
<dbReference type="InterPro" id="IPR027417">
    <property type="entry name" value="P-loop_NTPase"/>
</dbReference>
<dbReference type="InterPro" id="IPR049261">
    <property type="entry name" value="RecA-like_C"/>
</dbReference>
<dbReference type="InterPro" id="IPR049428">
    <property type="entry name" value="RecA-like_N"/>
</dbReference>
<dbReference type="InterPro" id="IPR020588">
    <property type="entry name" value="RecA_ATP-bd"/>
</dbReference>
<dbReference type="InterPro" id="IPR023400">
    <property type="entry name" value="RecA_C_sf"/>
</dbReference>
<dbReference type="InterPro" id="IPR020587">
    <property type="entry name" value="RecA_monomer-monomer_interface"/>
</dbReference>
<dbReference type="NCBIfam" id="TIGR02012">
    <property type="entry name" value="tigrfam_recA"/>
    <property type="match status" value="1"/>
</dbReference>
<dbReference type="PANTHER" id="PTHR45900:SF1">
    <property type="entry name" value="MITOCHONDRIAL DNA REPAIR PROTEIN RECA HOMOLOG-RELATED"/>
    <property type="match status" value="1"/>
</dbReference>
<dbReference type="PANTHER" id="PTHR45900">
    <property type="entry name" value="RECA"/>
    <property type="match status" value="1"/>
</dbReference>
<dbReference type="Pfam" id="PF00154">
    <property type="entry name" value="RecA"/>
    <property type="match status" value="1"/>
</dbReference>
<dbReference type="Pfam" id="PF21096">
    <property type="entry name" value="RecA_C"/>
    <property type="match status" value="1"/>
</dbReference>
<dbReference type="PRINTS" id="PR00142">
    <property type="entry name" value="RECA"/>
</dbReference>
<dbReference type="SMART" id="SM00382">
    <property type="entry name" value="AAA"/>
    <property type="match status" value="1"/>
</dbReference>
<dbReference type="SUPFAM" id="SSF52540">
    <property type="entry name" value="P-loop containing nucleoside triphosphate hydrolases"/>
    <property type="match status" value="1"/>
</dbReference>
<dbReference type="SUPFAM" id="SSF54752">
    <property type="entry name" value="RecA protein, C-terminal domain"/>
    <property type="match status" value="1"/>
</dbReference>
<dbReference type="PROSITE" id="PS00321">
    <property type="entry name" value="RECA_1"/>
    <property type="match status" value="1"/>
</dbReference>
<dbReference type="PROSITE" id="PS50162">
    <property type="entry name" value="RECA_2"/>
    <property type="match status" value="1"/>
</dbReference>
<dbReference type="PROSITE" id="PS50163">
    <property type="entry name" value="RECA_3"/>
    <property type="match status" value="1"/>
</dbReference>
<keyword id="KW-0067">ATP-binding</keyword>
<keyword id="KW-0963">Cytoplasm</keyword>
<keyword id="KW-0227">DNA damage</keyword>
<keyword id="KW-0233">DNA recombination</keyword>
<keyword id="KW-0234">DNA repair</keyword>
<keyword id="KW-0238">DNA-binding</keyword>
<keyword id="KW-0547">Nucleotide-binding</keyword>
<keyword id="KW-0742">SOS response</keyword>
<protein>
    <recommendedName>
        <fullName evidence="1">Protein RecA</fullName>
    </recommendedName>
    <alternativeName>
        <fullName evidence="1">Recombinase A</fullName>
    </alternativeName>
</protein>
<accession>A3PLJ2</accession>
<name>RECA_CERS1</name>
<gene>
    <name evidence="1" type="primary">recA</name>
    <name type="ordered locus">Rsph17029_2105</name>
</gene>
<proteinExistence type="inferred from homology"/>
<sequence length="357" mass="38254">MATANLLDLNGRREMDKAKALESALAQIERQFGKGSIMKLGANSPVMEIEATSTGSLGLDIALGIGGLPKGRIIEIYGPESSGKTTLTLHVVAEEQKKGGVCAFVDAEHALDPQYAKKLGVNLDELLISQPDTGEQALEIVDTLVRSGAVNLIVVDSVAALTPKSEIEGDMGDMQMGSQARLMSQAMRKLTASIGRSNCMVIFINQIRMKIGVMFGNPETTTGGNALKFYASVRLDIRRTGAIKDRDNVIGNTTKVKVVKNKVAPPFREVEFDIMYGEGISKTGELVDLGVKAGVVEKSGSWYSYGDERIGQGRENAKAFLRANPTVAGDIEDRIRASHGLDFSTGEDGKGDDLVDM</sequence>
<evidence type="ECO:0000255" key="1">
    <source>
        <dbReference type="HAMAP-Rule" id="MF_00268"/>
    </source>
</evidence>
<comment type="function">
    <text evidence="1">Can catalyze the hydrolysis of ATP in the presence of single-stranded DNA, the ATP-dependent uptake of single-stranded DNA by duplex DNA, and the ATP-dependent hybridization of homologous single-stranded DNAs. It interacts with LexA causing its activation and leading to its autocatalytic cleavage.</text>
</comment>
<comment type="subcellular location">
    <subcellularLocation>
        <location evidence="1">Cytoplasm</location>
    </subcellularLocation>
</comment>
<comment type="similarity">
    <text evidence="1">Belongs to the RecA family.</text>
</comment>
<organism>
    <name type="scientific">Cereibacter sphaeroides (strain ATCC 17029 / ATH 2.4.9)</name>
    <name type="common">Rhodobacter sphaeroides</name>
    <dbReference type="NCBI Taxonomy" id="349101"/>
    <lineage>
        <taxon>Bacteria</taxon>
        <taxon>Pseudomonadati</taxon>
        <taxon>Pseudomonadota</taxon>
        <taxon>Alphaproteobacteria</taxon>
        <taxon>Rhodobacterales</taxon>
        <taxon>Paracoccaceae</taxon>
        <taxon>Cereibacter</taxon>
    </lineage>
</organism>
<feature type="chain" id="PRO_1000047981" description="Protein RecA">
    <location>
        <begin position="1"/>
        <end position="357"/>
    </location>
</feature>
<feature type="binding site" evidence="1">
    <location>
        <begin position="78"/>
        <end position="85"/>
    </location>
    <ligand>
        <name>ATP</name>
        <dbReference type="ChEBI" id="CHEBI:30616"/>
    </ligand>
</feature>
<reference key="1">
    <citation type="submission" date="2007-02" db="EMBL/GenBank/DDBJ databases">
        <title>Complete sequence of chromosome 1 of Rhodobacter sphaeroides ATCC 17029.</title>
        <authorList>
            <person name="Copeland A."/>
            <person name="Lucas S."/>
            <person name="Lapidus A."/>
            <person name="Barry K."/>
            <person name="Detter J.C."/>
            <person name="Glavina del Rio T."/>
            <person name="Hammon N."/>
            <person name="Israni S."/>
            <person name="Dalin E."/>
            <person name="Tice H."/>
            <person name="Pitluck S."/>
            <person name="Kiss H."/>
            <person name="Brettin T."/>
            <person name="Bruce D."/>
            <person name="Han C."/>
            <person name="Tapia R."/>
            <person name="Gilna P."/>
            <person name="Schmutz J."/>
            <person name="Larimer F."/>
            <person name="Land M."/>
            <person name="Hauser L."/>
            <person name="Kyrpides N."/>
            <person name="Mikhailova N."/>
            <person name="Richardson P."/>
            <person name="Mackenzie C."/>
            <person name="Choudhary M."/>
            <person name="Donohue T.J."/>
            <person name="Kaplan S."/>
        </authorList>
    </citation>
    <scope>NUCLEOTIDE SEQUENCE [LARGE SCALE GENOMIC DNA]</scope>
    <source>
        <strain>ATCC 17029 / ATH 2.4.9</strain>
    </source>
</reference>